<sequence>MNDVSKASLPKAIFLMGPTASGKTALAIELRKVLPVELISVDSALIYRGMDIGTAKPNADELKAAPHRLLDIRDPSQAYSAADFRRDALAQMAEITSAGRIPLLVGGTMLYFKALLEGLSPLPSADPEVRSRIEQQAAELGWEALHQQLQEIDPVAAARIHPNDPQRLSRALEVFFISGKTLTELTQTSGDALPYQVHQFAIAPASRELLHQRIELRFHQMLASGFEAEVRALFARGDLHTDLPSIRCVGYRQMWSYIEGEISYDEMVYRGVCATRQLAKRQMTWLRGWEGVRWLDSENPDRARKEVLQVVGAIAD</sequence>
<gene>
    <name evidence="1" type="primary">miaA</name>
    <name type="ordered locus">SG4201</name>
</gene>
<protein>
    <recommendedName>
        <fullName evidence="1">tRNA dimethylallyltransferase</fullName>
        <ecNumber evidence="1">2.5.1.75</ecNumber>
    </recommendedName>
    <alternativeName>
        <fullName evidence="1">Dimethylallyl diphosphate:tRNA dimethylallyltransferase</fullName>
        <shortName evidence="1">DMAPP:tRNA dimethylallyltransferase</shortName>
        <shortName evidence="1">DMATase</shortName>
    </alternativeName>
    <alternativeName>
        <fullName evidence="1">Isopentenyl-diphosphate:tRNA isopentenyltransferase</fullName>
        <shortName evidence="1">IPP transferase</shortName>
        <shortName evidence="1">IPPT</shortName>
        <shortName evidence="1">IPTase</shortName>
    </alternativeName>
</protein>
<accession>B5R9B8</accession>
<reference key="1">
    <citation type="journal article" date="2008" name="Genome Res.">
        <title>Comparative genome analysis of Salmonella enteritidis PT4 and Salmonella gallinarum 287/91 provides insights into evolutionary and host adaptation pathways.</title>
        <authorList>
            <person name="Thomson N.R."/>
            <person name="Clayton D.J."/>
            <person name="Windhorst D."/>
            <person name="Vernikos G."/>
            <person name="Davidson S."/>
            <person name="Churcher C."/>
            <person name="Quail M.A."/>
            <person name="Stevens M."/>
            <person name="Jones M.A."/>
            <person name="Watson M."/>
            <person name="Barron A."/>
            <person name="Layton A."/>
            <person name="Pickard D."/>
            <person name="Kingsley R.A."/>
            <person name="Bignell A."/>
            <person name="Clark L."/>
            <person name="Harris B."/>
            <person name="Ormond D."/>
            <person name="Abdellah Z."/>
            <person name="Brooks K."/>
            <person name="Cherevach I."/>
            <person name="Chillingworth T."/>
            <person name="Woodward J."/>
            <person name="Norberczak H."/>
            <person name="Lord A."/>
            <person name="Arrowsmith C."/>
            <person name="Jagels K."/>
            <person name="Moule S."/>
            <person name="Mungall K."/>
            <person name="Saunders M."/>
            <person name="Whitehead S."/>
            <person name="Chabalgoity J.A."/>
            <person name="Maskell D."/>
            <person name="Humphreys T."/>
            <person name="Roberts M."/>
            <person name="Barrow P.A."/>
            <person name="Dougan G."/>
            <person name="Parkhill J."/>
        </authorList>
    </citation>
    <scope>NUCLEOTIDE SEQUENCE [LARGE SCALE GENOMIC DNA]</scope>
    <source>
        <strain>287/91 / NCTC 13346</strain>
    </source>
</reference>
<feature type="chain" id="PRO_1000098684" description="tRNA dimethylallyltransferase">
    <location>
        <begin position="1"/>
        <end position="316"/>
    </location>
</feature>
<feature type="region of interest" description="Interaction with substrate tRNA" evidence="1">
    <location>
        <begin position="42"/>
        <end position="45"/>
    </location>
</feature>
<feature type="region of interest" description="Interaction with substrate tRNA" evidence="1">
    <location>
        <begin position="166"/>
        <end position="170"/>
    </location>
</feature>
<feature type="region of interest" description="Interaction with substrate tRNA" evidence="1">
    <location>
        <begin position="247"/>
        <end position="252"/>
    </location>
</feature>
<feature type="binding site" evidence="1">
    <location>
        <begin position="17"/>
        <end position="24"/>
    </location>
    <ligand>
        <name>ATP</name>
        <dbReference type="ChEBI" id="CHEBI:30616"/>
    </ligand>
</feature>
<feature type="binding site" evidence="1">
    <location>
        <begin position="19"/>
        <end position="24"/>
    </location>
    <ligand>
        <name>substrate</name>
    </ligand>
</feature>
<feature type="site" description="Interaction with substrate tRNA" evidence="1">
    <location>
        <position position="108"/>
    </location>
</feature>
<feature type="site" description="Interaction with substrate tRNA" evidence="1">
    <location>
        <position position="130"/>
    </location>
</feature>
<evidence type="ECO:0000255" key="1">
    <source>
        <dbReference type="HAMAP-Rule" id="MF_00185"/>
    </source>
</evidence>
<name>MIAA_SALG2</name>
<organism>
    <name type="scientific">Salmonella gallinarum (strain 287/91 / NCTC 13346)</name>
    <dbReference type="NCBI Taxonomy" id="550538"/>
    <lineage>
        <taxon>Bacteria</taxon>
        <taxon>Pseudomonadati</taxon>
        <taxon>Pseudomonadota</taxon>
        <taxon>Gammaproteobacteria</taxon>
        <taxon>Enterobacterales</taxon>
        <taxon>Enterobacteriaceae</taxon>
        <taxon>Salmonella</taxon>
    </lineage>
</organism>
<keyword id="KW-0067">ATP-binding</keyword>
<keyword id="KW-0460">Magnesium</keyword>
<keyword id="KW-0547">Nucleotide-binding</keyword>
<keyword id="KW-0808">Transferase</keyword>
<keyword id="KW-0819">tRNA processing</keyword>
<proteinExistence type="inferred from homology"/>
<comment type="function">
    <text evidence="1">Catalyzes the transfer of a dimethylallyl group onto the adenine at position 37 in tRNAs that read codons beginning with uridine, leading to the formation of N6-(dimethylallyl)adenosine (i(6)A).</text>
</comment>
<comment type="catalytic activity">
    <reaction evidence="1">
        <text>adenosine(37) in tRNA + dimethylallyl diphosphate = N(6)-dimethylallyladenosine(37) in tRNA + diphosphate</text>
        <dbReference type="Rhea" id="RHEA:26482"/>
        <dbReference type="Rhea" id="RHEA-COMP:10162"/>
        <dbReference type="Rhea" id="RHEA-COMP:10375"/>
        <dbReference type="ChEBI" id="CHEBI:33019"/>
        <dbReference type="ChEBI" id="CHEBI:57623"/>
        <dbReference type="ChEBI" id="CHEBI:74411"/>
        <dbReference type="ChEBI" id="CHEBI:74415"/>
        <dbReference type="EC" id="2.5.1.75"/>
    </reaction>
</comment>
<comment type="cofactor">
    <cofactor evidence="1">
        <name>Mg(2+)</name>
        <dbReference type="ChEBI" id="CHEBI:18420"/>
    </cofactor>
</comment>
<comment type="subunit">
    <text evidence="1">Monomer.</text>
</comment>
<comment type="similarity">
    <text evidence="1">Belongs to the IPP transferase family.</text>
</comment>
<dbReference type="EC" id="2.5.1.75" evidence="1"/>
<dbReference type="EMBL" id="AM933173">
    <property type="protein sequence ID" value="CAR39966.1"/>
    <property type="molecule type" value="Genomic_DNA"/>
</dbReference>
<dbReference type="RefSeq" id="WP_001000736.1">
    <property type="nucleotide sequence ID" value="NC_011274.1"/>
</dbReference>
<dbReference type="SMR" id="B5R9B8"/>
<dbReference type="KEGG" id="seg:SG4201"/>
<dbReference type="HOGENOM" id="CLU_032616_0_0_6"/>
<dbReference type="Proteomes" id="UP000008321">
    <property type="component" value="Chromosome"/>
</dbReference>
<dbReference type="GO" id="GO:0005524">
    <property type="term" value="F:ATP binding"/>
    <property type="evidence" value="ECO:0007669"/>
    <property type="project" value="UniProtKB-UniRule"/>
</dbReference>
<dbReference type="GO" id="GO:0052381">
    <property type="term" value="F:tRNA dimethylallyltransferase activity"/>
    <property type="evidence" value="ECO:0007669"/>
    <property type="project" value="UniProtKB-UniRule"/>
</dbReference>
<dbReference type="GO" id="GO:0006400">
    <property type="term" value="P:tRNA modification"/>
    <property type="evidence" value="ECO:0007669"/>
    <property type="project" value="TreeGrafter"/>
</dbReference>
<dbReference type="FunFam" id="1.10.20.140:FF:000001">
    <property type="entry name" value="tRNA dimethylallyltransferase"/>
    <property type="match status" value="1"/>
</dbReference>
<dbReference type="FunFam" id="1.10.287.890:FF:000001">
    <property type="entry name" value="tRNA dimethylallyltransferase"/>
    <property type="match status" value="1"/>
</dbReference>
<dbReference type="Gene3D" id="1.10.20.140">
    <property type="match status" value="1"/>
</dbReference>
<dbReference type="Gene3D" id="1.10.287.890">
    <property type="entry name" value="Crystal structure of tRNA isopentenylpyrophosphate transferase (bh2366) domain"/>
    <property type="match status" value="1"/>
</dbReference>
<dbReference type="Gene3D" id="3.40.50.300">
    <property type="entry name" value="P-loop containing nucleotide triphosphate hydrolases"/>
    <property type="match status" value="1"/>
</dbReference>
<dbReference type="HAMAP" id="MF_00185">
    <property type="entry name" value="IPP_trans"/>
    <property type="match status" value="1"/>
</dbReference>
<dbReference type="InterPro" id="IPR039657">
    <property type="entry name" value="Dimethylallyltransferase"/>
</dbReference>
<dbReference type="InterPro" id="IPR018022">
    <property type="entry name" value="IPT"/>
</dbReference>
<dbReference type="InterPro" id="IPR027417">
    <property type="entry name" value="P-loop_NTPase"/>
</dbReference>
<dbReference type="NCBIfam" id="TIGR00174">
    <property type="entry name" value="miaA"/>
    <property type="match status" value="1"/>
</dbReference>
<dbReference type="PANTHER" id="PTHR11088">
    <property type="entry name" value="TRNA DIMETHYLALLYLTRANSFERASE"/>
    <property type="match status" value="1"/>
</dbReference>
<dbReference type="PANTHER" id="PTHR11088:SF60">
    <property type="entry name" value="TRNA DIMETHYLALLYLTRANSFERASE"/>
    <property type="match status" value="1"/>
</dbReference>
<dbReference type="Pfam" id="PF01715">
    <property type="entry name" value="IPPT"/>
    <property type="match status" value="1"/>
</dbReference>
<dbReference type="SUPFAM" id="SSF52540">
    <property type="entry name" value="P-loop containing nucleoside triphosphate hydrolases"/>
    <property type="match status" value="1"/>
</dbReference>